<accession>B0BSY9</accession>
<sequence>MRGKFIVLEGLEGAGKTTAHQVILAQLEKAGKNVVQTREPGGTPLAEKLRHLIKHETEEAVSDKAELLMLYAARIQLVENVIKPALAEGKWVLGDRHDMSSQAYQGGGRQIDRHLLETLKETVLGNFEPDLTIYLDIDPAVGLARARGRGELDRIEQQSLDFFYRTRQRYLELTQNNEKAVIINAEQSIEQVAADIQQAVENFLKIAK</sequence>
<keyword id="KW-0067">ATP-binding</keyword>
<keyword id="KW-0418">Kinase</keyword>
<keyword id="KW-0545">Nucleotide biosynthesis</keyword>
<keyword id="KW-0547">Nucleotide-binding</keyword>
<keyword id="KW-0808">Transferase</keyword>
<gene>
    <name evidence="1" type="primary">tmk</name>
    <name type="ordered locus">APJL_1853</name>
</gene>
<organism>
    <name type="scientific">Actinobacillus pleuropneumoniae serotype 3 (strain JL03)</name>
    <dbReference type="NCBI Taxonomy" id="434271"/>
    <lineage>
        <taxon>Bacteria</taxon>
        <taxon>Pseudomonadati</taxon>
        <taxon>Pseudomonadota</taxon>
        <taxon>Gammaproteobacteria</taxon>
        <taxon>Pasteurellales</taxon>
        <taxon>Pasteurellaceae</taxon>
        <taxon>Actinobacillus</taxon>
    </lineage>
</organism>
<feature type="chain" id="PRO_1000097372" description="Thymidylate kinase">
    <location>
        <begin position="1"/>
        <end position="208"/>
    </location>
</feature>
<feature type="binding site" evidence="1">
    <location>
        <begin position="10"/>
        <end position="17"/>
    </location>
    <ligand>
        <name>ATP</name>
        <dbReference type="ChEBI" id="CHEBI:30616"/>
    </ligand>
</feature>
<name>KTHY_ACTPJ</name>
<comment type="function">
    <text evidence="1">Phosphorylation of dTMP to form dTDP in both de novo and salvage pathways of dTTP synthesis.</text>
</comment>
<comment type="catalytic activity">
    <reaction evidence="1">
        <text>dTMP + ATP = dTDP + ADP</text>
        <dbReference type="Rhea" id="RHEA:13517"/>
        <dbReference type="ChEBI" id="CHEBI:30616"/>
        <dbReference type="ChEBI" id="CHEBI:58369"/>
        <dbReference type="ChEBI" id="CHEBI:63528"/>
        <dbReference type="ChEBI" id="CHEBI:456216"/>
        <dbReference type="EC" id="2.7.4.9"/>
    </reaction>
</comment>
<comment type="similarity">
    <text evidence="1">Belongs to the thymidylate kinase family.</text>
</comment>
<evidence type="ECO:0000255" key="1">
    <source>
        <dbReference type="HAMAP-Rule" id="MF_00165"/>
    </source>
</evidence>
<proteinExistence type="inferred from homology"/>
<dbReference type="EC" id="2.7.4.9" evidence="1"/>
<dbReference type="EMBL" id="CP000687">
    <property type="protein sequence ID" value="ABY70403.1"/>
    <property type="molecule type" value="Genomic_DNA"/>
</dbReference>
<dbReference type="RefSeq" id="WP_005599398.1">
    <property type="nucleotide sequence ID" value="NC_010278.1"/>
</dbReference>
<dbReference type="SMR" id="B0BSY9"/>
<dbReference type="GeneID" id="48600109"/>
<dbReference type="KEGG" id="apj:APJL_1853"/>
<dbReference type="HOGENOM" id="CLU_049131_0_1_6"/>
<dbReference type="Proteomes" id="UP000008547">
    <property type="component" value="Chromosome"/>
</dbReference>
<dbReference type="GO" id="GO:0005829">
    <property type="term" value="C:cytosol"/>
    <property type="evidence" value="ECO:0007669"/>
    <property type="project" value="TreeGrafter"/>
</dbReference>
<dbReference type="GO" id="GO:0005524">
    <property type="term" value="F:ATP binding"/>
    <property type="evidence" value="ECO:0007669"/>
    <property type="project" value="UniProtKB-UniRule"/>
</dbReference>
<dbReference type="GO" id="GO:0004798">
    <property type="term" value="F:dTMP kinase activity"/>
    <property type="evidence" value="ECO:0007669"/>
    <property type="project" value="UniProtKB-UniRule"/>
</dbReference>
<dbReference type="GO" id="GO:0006233">
    <property type="term" value="P:dTDP biosynthetic process"/>
    <property type="evidence" value="ECO:0007669"/>
    <property type="project" value="InterPro"/>
</dbReference>
<dbReference type="GO" id="GO:0006235">
    <property type="term" value="P:dTTP biosynthetic process"/>
    <property type="evidence" value="ECO:0007669"/>
    <property type="project" value="UniProtKB-UniRule"/>
</dbReference>
<dbReference type="GO" id="GO:0006227">
    <property type="term" value="P:dUDP biosynthetic process"/>
    <property type="evidence" value="ECO:0007669"/>
    <property type="project" value="TreeGrafter"/>
</dbReference>
<dbReference type="CDD" id="cd01672">
    <property type="entry name" value="TMPK"/>
    <property type="match status" value="1"/>
</dbReference>
<dbReference type="FunFam" id="3.40.50.300:FF:000321">
    <property type="entry name" value="Thymidylate kinase"/>
    <property type="match status" value="1"/>
</dbReference>
<dbReference type="Gene3D" id="3.40.50.300">
    <property type="entry name" value="P-loop containing nucleotide triphosphate hydrolases"/>
    <property type="match status" value="1"/>
</dbReference>
<dbReference type="HAMAP" id="MF_00165">
    <property type="entry name" value="Thymidylate_kinase"/>
    <property type="match status" value="1"/>
</dbReference>
<dbReference type="InterPro" id="IPR027417">
    <property type="entry name" value="P-loop_NTPase"/>
</dbReference>
<dbReference type="InterPro" id="IPR039430">
    <property type="entry name" value="Thymidylate_kin-like_dom"/>
</dbReference>
<dbReference type="InterPro" id="IPR018095">
    <property type="entry name" value="Thymidylate_kin_CS"/>
</dbReference>
<dbReference type="InterPro" id="IPR018094">
    <property type="entry name" value="Thymidylate_kinase"/>
</dbReference>
<dbReference type="NCBIfam" id="TIGR00041">
    <property type="entry name" value="DTMP_kinase"/>
    <property type="match status" value="1"/>
</dbReference>
<dbReference type="PANTHER" id="PTHR10344">
    <property type="entry name" value="THYMIDYLATE KINASE"/>
    <property type="match status" value="1"/>
</dbReference>
<dbReference type="PANTHER" id="PTHR10344:SF4">
    <property type="entry name" value="UMP-CMP KINASE 2, MITOCHONDRIAL"/>
    <property type="match status" value="1"/>
</dbReference>
<dbReference type="Pfam" id="PF02223">
    <property type="entry name" value="Thymidylate_kin"/>
    <property type="match status" value="1"/>
</dbReference>
<dbReference type="SUPFAM" id="SSF52540">
    <property type="entry name" value="P-loop containing nucleoside triphosphate hydrolases"/>
    <property type="match status" value="1"/>
</dbReference>
<dbReference type="PROSITE" id="PS01331">
    <property type="entry name" value="THYMIDYLATE_KINASE"/>
    <property type="match status" value="1"/>
</dbReference>
<protein>
    <recommendedName>
        <fullName evidence="1">Thymidylate kinase</fullName>
        <ecNumber evidence="1">2.7.4.9</ecNumber>
    </recommendedName>
    <alternativeName>
        <fullName evidence="1">dTMP kinase</fullName>
    </alternativeName>
</protein>
<reference key="1">
    <citation type="journal article" date="2008" name="PLoS ONE">
        <title>Genome biology of Actinobacillus pleuropneumoniae JL03, an isolate of serotype 3 prevalent in China.</title>
        <authorList>
            <person name="Xu Z."/>
            <person name="Zhou Y."/>
            <person name="Li L."/>
            <person name="Zhou R."/>
            <person name="Xiao S."/>
            <person name="Wan Y."/>
            <person name="Zhang S."/>
            <person name="Wang K."/>
            <person name="Li W."/>
            <person name="Li L."/>
            <person name="Jin H."/>
            <person name="Kang M."/>
            <person name="Dalai B."/>
            <person name="Li T."/>
            <person name="Liu L."/>
            <person name="Cheng Y."/>
            <person name="Zhang L."/>
            <person name="Xu T."/>
            <person name="Zheng H."/>
            <person name="Pu S."/>
            <person name="Wang B."/>
            <person name="Gu W."/>
            <person name="Zhang X.L."/>
            <person name="Zhu G.-F."/>
            <person name="Wang S."/>
            <person name="Zhao G.-P."/>
            <person name="Chen H."/>
        </authorList>
    </citation>
    <scope>NUCLEOTIDE SEQUENCE [LARGE SCALE GENOMIC DNA]</scope>
    <source>
        <strain>JL03</strain>
    </source>
</reference>